<proteinExistence type="inferred from homology"/>
<reference key="1">
    <citation type="journal article" date="2006" name="BMC Genomics">
        <title>Complete genome sequence of Shigella flexneri 5b and comparison with Shigella flexneri 2a.</title>
        <authorList>
            <person name="Nie H."/>
            <person name="Yang F."/>
            <person name="Zhang X."/>
            <person name="Yang J."/>
            <person name="Chen L."/>
            <person name="Wang J."/>
            <person name="Xiong Z."/>
            <person name="Peng J."/>
            <person name="Sun L."/>
            <person name="Dong J."/>
            <person name="Xue Y."/>
            <person name="Xu X."/>
            <person name="Chen S."/>
            <person name="Yao Z."/>
            <person name="Shen Y."/>
            <person name="Jin Q."/>
        </authorList>
    </citation>
    <scope>NUCLEOTIDE SEQUENCE [LARGE SCALE GENOMIC DNA]</scope>
    <source>
        <strain>8401</strain>
    </source>
</reference>
<comment type="function">
    <text evidence="1">Catalyzes the synthesis of GMP from XMP.</text>
</comment>
<comment type="catalytic activity">
    <reaction evidence="1">
        <text>XMP + L-glutamine + ATP + H2O = GMP + L-glutamate + AMP + diphosphate + 2 H(+)</text>
        <dbReference type="Rhea" id="RHEA:11680"/>
        <dbReference type="ChEBI" id="CHEBI:15377"/>
        <dbReference type="ChEBI" id="CHEBI:15378"/>
        <dbReference type="ChEBI" id="CHEBI:29985"/>
        <dbReference type="ChEBI" id="CHEBI:30616"/>
        <dbReference type="ChEBI" id="CHEBI:33019"/>
        <dbReference type="ChEBI" id="CHEBI:57464"/>
        <dbReference type="ChEBI" id="CHEBI:58115"/>
        <dbReference type="ChEBI" id="CHEBI:58359"/>
        <dbReference type="ChEBI" id="CHEBI:456215"/>
        <dbReference type="EC" id="6.3.5.2"/>
    </reaction>
</comment>
<comment type="pathway">
    <text evidence="1">Purine metabolism; GMP biosynthesis; GMP from XMP (L-Gln route): step 1/1.</text>
</comment>
<comment type="subunit">
    <text evidence="1">Homodimer.</text>
</comment>
<sequence length="525" mass="58680">MTENIHKHRILILDFGSQYTQLVARRVRELGVYCELWAWDVTEAQIRDFNPSGIILSGGPESTTEENSPRAPQYVFEAGVPIFGVCYGMQTMAMQLGGHVEASNEREFGYAQVEVVNDSALVRGIEDALTADGKPLLDVWMSHGDKVTAIPSDFVTVASTESCPFAIMANEEKRFYGVQFHPEVTHTRQGMRMLERFVRDICQCEALWTPAKIIDDAVARIREQVGDDKVILGLSGGVDSSVTAMLLHRAIGKNLTCVFVDNGLLRLNEAEQVLDMFGDHFGLNIVHVPAEDRFLSALAGENDPEAKRKIIGRVFVEVFDEEALKLEDVKWLAQGTIYPDVIESAASATGKAHVIKSHHNVGGLPKEMKMGLVEPLKELFKDEVREIGLELGLPYDMLYRHPFPGPGLGVRVLGEVKKEYCDLLRRADAIFIEELRKADLYDKVSQAFTVFLPVRSVGVMGDGRKYDWVVSLRAVETIDFMTAHWAHLPYDFLGRVSNRIINEVNGISRVVYDISGKPPATIEWE</sequence>
<organism>
    <name type="scientific">Shigella flexneri serotype 5b (strain 8401)</name>
    <dbReference type="NCBI Taxonomy" id="373384"/>
    <lineage>
        <taxon>Bacteria</taxon>
        <taxon>Pseudomonadati</taxon>
        <taxon>Pseudomonadota</taxon>
        <taxon>Gammaproteobacteria</taxon>
        <taxon>Enterobacterales</taxon>
        <taxon>Enterobacteriaceae</taxon>
        <taxon>Shigella</taxon>
    </lineage>
</organism>
<accession>Q0T212</accession>
<gene>
    <name evidence="1" type="primary">guaA</name>
    <name type="ordered locus">SFV_2554</name>
</gene>
<protein>
    <recommendedName>
        <fullName evidence="1">GMP synthase [glutamine-hydrolyzing]</fullName>
        <ecNumber evidence="1">6.3.5.2</ecNumber>
    </recommendedName>
    <alternativeName>
        <fullName evidence="1">GMP synthetase</fullName>
    </alternativeName>
    <alternativeName>
        <fullName evidence="1">Glutamine amidotransferase</fullName>
    </alternativeName>
</protein>
<evidence type="ECO:0000255" key="1">
    <source>
        <dbReference type="HAMAP-Rule" id="MF_00344"/>
    </source>
</evidence>
<keyword id="KW-0067">ATP-binding</keyword>
<keyword id="KW-0315">Glutamine amidotransferase</keyword>
<keyword id="KW-0332">GMP biosynthesis</keyword>
<keyword id="KW-0436">Ligase</keyword>
<keyword id="KW-0547">Nucleotide-binding</keyword>
<keyword id="KW-0658">Purine biosynthesis</keyword>
<feature type="chain" id="PRO_1000120415" description="GMP synthase [glutamine-hydrolyzing]">
    <location>
        <begin position="1"/>
        <end position="525"/>
    </location>
</feature>
<feature type="domain" description="Glutamine amidotransferase type-1" evidence="1">
    <location>
        <begin position="9"/>
        <end position="207"/>
    </location>
</feature>
<feature type="domain" description="GMPS ATP-PPase" evidence="1">
    <location>
        <begin position="208"/>
        <end position="400"/>
    </location>
</feature>
<feature type="active site" description="Nucleophile" evidence="1">
    <location>
        <position position="86"/>
    </location>
</feature>
<feature type="active site" evidence="1">
    <location>
        <position position="181"/>
    </location>
</feature>
<feature type="active site" evidence="1">
    <location>
        <position position="183"/>
    </location>
</feature>
<feature type="binding site" evidence="1">
    <location>
        <begin position="235"/>
        <end position="241"/>
    </location>
    <ligand>
        <name>ATP</name>
        <dbReference type="ChEBI" id="CHEBI:30616"/>
    </ligand>
</feature>
<name>GUAA_SHIF8</name>
<dbReference type="EC" id="6.3.5.2" evidence="1"/>
<dbReference type="EMBL" id="CP000266">
    <property type="protein sequence ID" value="ABF04653.1"/>
    <property type="molecule type" value="Genomic_DNA"/>
</dbReference>
<dbReference type="RefSeq" id="WP_000138257.1">
    <property type="nucleotide sequence ID" value="NC_008258.1"/>
</dbReference>
<dbReference type="SMR" id="Q0T212"/>
<dbReference type="KEGG" id="sfv:SFV_2554"/>
<dbReference type="HOGENOM" id="CLU_014340_0_5_6"/>
<dbReference type="UniPathway" id="UPA00189">
    <property type="reaction ID" value="UER00296"/>
</dbReference>
<dbReference type="Proteomes" id="UP000000659">
    <property type="component" value="Chromosome"/>
</dbReference>
<dbReference type="GO" id="GO:0005829">
    <property type="term" value="C:cytosol"/>
    <property type="evidence" value="ECO:0007669"/>
    <property type="project" value="TreeGrafter"/>
</dbReference>
<dbReference type="GO" id="GO:0005524">
    <property type="term" value="F:ATP binding"/>
    <property type="evidence" value="ECO:0007669"/>
    <property type="project" value="UniProtKB-UniRule"/>
</dbReference>
<dbReference type="GO" id="GO:0003921">
    <property type="term" value="F:GMP synthase activity"/>
    <property type="evidence" value="ECO:0007669"/>
    <property type="project" value="InterPro"/>
</dbReference>
<dbReference type="CDD" id="cd01742">
    <property type="entry name" value="GATase1_GMP_Synthase"/>
    <property type="match status" value="1"/>
</dbReference>
<dbReference type="CDD" id="cd01997">
    <property type="entry name" value="GMP_synthase_C"/>
    <property type="match status" value="1"/>
</dbReference>
<dbReference type="FunFam" id="3.30.300.10:FF:000002">
    <property type="entry name" value="GMP synthase [glutamine-hydrolyzing]"/>
    <property type="match status" value="1"/>
</dbReference>
<dbReference type="FunFam" id="3.40.50.620:FF:000001">
    <property type="entry name" value="GMP synthase [glutamine-hydrolyzing]"/>
    <property type="match status" value="1"/>
</dbReference>
<dbReference type="FunFam" id="3.40.50.880:FF:000001">
    <property type="entry name" value="GMP synthase [glutamine-hydrolyzing]"/>
    <property type="match status" value="1"/>
</dbReference>
<dbReference type="Gene3D" id="3.30.300.10">
    <property type="match status" value="1"/>
</dbReference>
<dbReference type="Gene3D" id="3.40.50.880">
    <property type="match status" value="1"/>
</dbReference>
<dbReference type="Gene3D" id="3.40.50.620">
    <property type="entry name" value="HUPs"/>
    <property type="match status" value="1"/>
</dbReference>
<dbReference type="HAMAP" id="MF_00344">
    <property type="entry name" value="GMP_synthase"/>
    <property type="match status" value="1"/>
</dbReference>
<dbReference type="InterPro" id="IPR029062">
    <property type="entry name" value="Class_I_gatase-like"/>
</dbReference>
<dbReference type="InterPro" id="IPR017926">
    <property type="entry name" value="GATASE"/>
</dbReference>
<dbReference type="InterPro" id="IPR001674">
    <property type="entry name" value="GMP_synth_C"/>
</dbReference>
<dbReference type="InterPro" id="IPR004739">
    <property type="entry name" value="GMP_synth_GATase"/>
</dbReference>
<dbReference type="InterPro" id="IPR022955">
    <property type="entry name" value="GMP_synthase"/>
</dbReference>
<dbReference type="InterPro" id="IPR025777">
    <property type="entry name" value="GMPS_ATP_PPase_dom"/>
</dbReference>
<dbReference type="InterPro" id="IPR022310">
    <property type="entry name" value="NAD/GMP_synthase"/>
</dbReference>
<dbReference type="InterPro" id="IPR014729">
    <property type="entry name" value="Rossmann-like_a/b/a_fold"/>
</dbReference>
<dbReference type="NCBIfam" id="TIGR00884">
    <property type="entry name" value="guaA_Cterm"/>
    <property type="match status" value="1"/>
</dbReference>
<dbReference type="NCBIfam" id="TIGR00888">
    <property type="entry name" value="guaA_Nterm"/>
    <property type="match status" value="1"/>
</dbReference>
<dbReference type="NCBIfam" id="NF000848">
    <property type="entry name" value="PRK00074.1"/>
    <property type="match status" value="1"/>
</dbReference>
<dbReference type="PANTHER" id="PTHR11922:SF2">
    <property type="entry name" value="GMP SYNTHASE [GLUTAMINE-HYDROLYZING]"/>
    <property type="match status" value="1"/>
</dbReference>
<dbReference type="PANTHER" id="PTHR11922">
    <property type="entry name" value="GMP SYNTHASE-RELATED"/>
    <property type="match status" value="1"/>
</dbReference>
<dbReference type="Pfam" id="PF00117">
    <property type="entry name" value="GATase"/>
    <property type="match status" value="1"/>
</dbReference>
<dbReference type="Pfam" id="PF00958">
    <property type="entry name" value="GMP_synt_C"/>
    <property type="match status" value="1"/>
</dbReference>
<dbReference type="Pfam" id="PF02540">
    <property type="entry name" value="NAD_synthase"/>
    <property type="match status" value="1"/>
</dbReference>
<dbReference type="PRINTS" id="PR00097">
    <property type="entry name" value="ANTSNTHASEII"/>
</dbReference>
<dbReference type="PRINTS" id="PR00099">
    <property type="entry name" value="CPSGATASE"/>
</dbReference>
<dbReference type="PRINTS" id="PR00096">
    <property type="entry name" value="GATASE"/>
</dbReference>
<dbReference type="SUPFAM" id="SSF52402">
    <property type="entry name" value="Adenine nucleotide alpha hydrolases-like"/>
    <property type="match status" value="1"/>
</dbReference>
<dbReference type="SUPFAM" id="SSF52317">
    <property type="entry name" value="Class I glutamine amidotransferase-like"/>
    <property type="match status" value="1"/>
</dbReference>
<dbReference type="SUPFAM" id="SSF54810">
    <property type="entry name" value="GMP synthetase C-terminal dimerisation domain"/>
    <property type="match status" value="1"/>
</dbReference>
<dbReference type="PROSITE" id="PS51273">
    <property type="entry name" value="GATASE_TYPE_1"/>
    <property type="match status" value="1"/>
</dbReference>
<dbReference type="PROSITE" id="PS51553">
    <property type="entry name" value="GMPS_ATP_PPASE"/>
    <property type="match status" value="1"/>
</dbReference>